<evidence type="ECO:0000255" key="1">
    <source>
        <dbReference type="HAMAP-Rule" id="MF_03009"/>
    </source>
</evidence>
<evidence type="ECO:0000256" key="2">
    <source>
        <dbReference type="SAM" id="MobiDB-lite"/>
    </source>
</evidence>
<evidence type="ECO:0000269" key="3">
    <source>
    </source>
</evidence>
<evidence type="ECO:0000269" key="4">
    <source>
    </source>
</evidence>
<evidence type="ECO:0000269" key="5">
    <source>
    </source>
</evidence>
<evidence type="ECO:0000269" key="6">
    <source>
    </source>
</evidence>
<evidence type="ECO:0000269" key="7">
    <source>
    </source>
</evidence>
<evidence type="ECO:0000303" key="8">
    <source>
    </source>
</evidence>
<evidence type="ECO:0007744" key="9">
    <source>
        <dbReference type="PDB" id="6ZCE"/>
    </source>
</evidence>
<evidence type="ECO:0007744" key="10">
    <source>
        <dbReference type="PDB" id="7A1G"/>
    </source>
</evidence>
<evidence type="ECO:0007744" key="11">
    <source>
    </source>
</evidence>
<evidence type="ECO:0007744" key="12">
    <source>
    </source>
</evidence>
<evidence type="ECO:0007744" key="13">
    <source>
    </source>
</evidence>
<evidence type="ECO:0007829" key="14">
    <source>
        <dbReference type="PDB" id="7A1G"/>
    </source>
</evidence>
<reference key="1">
    <citation type="journal article" date="1997" name="Nature">
        <title>The nucleotide sequence of Saccharomyces cerevisiae chromosome XII.</title>
        <authorList>
            <person name="Johnston M."/>
            <person name="Hillier L.W."/>
            <person name="Riles L."/>
            <person name="Albermann K."/>
            <person name="Andre B."/>
            <person name="Ansorge W."/>
            <person name="Benes V."/>
            <person name="Brueckner M."/>
            <person name="Delius H."/>
            <person name="Dubois E."/>
            <person name="Duesterhoeft A."/>
            <person name="Entian K.-D."/>
            <person name="Floeth M."/>
            <person name="Goffeau A."/>
            <person name="Hebling U."/>
            <person name="Heumann K."/>
            <person name="Heuss-Neitzel D."/>
            <person name="Hilbert H."/>
            <person name="Hilger F."/>
            <person name="Kleine K."/>
            <person name="Koetter P."/>
            <person name="Louis E.J."/>
            <person name="Messenguy F."/>
            <person name="Mewes H.-W."/>
            <person name="Miosga T."/>
            <person name="Moestl D."/>
            <person name="Mueller-Auer S."/>
            <person name="Nentwich U."/>
            <person name="Obermaier B."/>
            <person name="Piravandi E."/>
            <person name="Pohl T.M."/>
            <person name="Portetelle D."/>
            <person name="Purnelle B."/>
            <person name="Rechmann S."/>
            <person name="Rieger M."/>
            <person name="Rinke M."/>
            <person name="Rose M."/>
            <person name="Scharfe M."/>
            <person name="Scherens B."/>
            <person name="Scholler P."/>
            <person name="Schwager C."/>
            <person name="Schwarz S."/>
            <person name="Underwood A.P."/>
            <person name="Urrestarazu L.A."/>
            <person name="Vandenbol M."/>
            <person name="Verhasselt P."/>
            <person name="Vierendeels F."/>
            <person name="Voet M."/>
            <person name="Volckaert G."/>
            <person name="Voss H."/>
            <person name="Wambutt R."/>
            <person name="Wedler E."/>
            <person name="Wedler H."/>
            <person name="Zimmermann F.K."/>
            <person name="Zollner A."/>
            <person name="Hani J."/>
            <person name="Hoheisel J.D."/>
        </authorList>
    </citation>
    <scope>NUCLEOTIDE SEQUENCE [LARGE SCALE GENOMIC DNA]</scope>
    <source>
        <strain>ATCC 204508 / S288c</strain>
    </source>
</reference>
<reference key="2">
    <citation type="journal article" date="2014" name="G3 (Bethesda)">
        <title>The reference genome sequence of Saccharomyces cerevisiae: Then and now.</title>
        <authorList>
            <person name="Engel S.R."/>
            <person name="Dietrich F.S."/>
            <person name="Fisk D.G."/>
            <person name="Binkley G."/>
            <person name="Balakrishnan R."/>
            <person name="Costanzo M.C."/>
            <person name="Dwight S.S."/>
            <person name="Hitz B.C."/>
            <person name="Karra K."/>
            <person name="Nash R.S."/>
            <person name="Weng S."/>
            <person name="Wong E.D."/>
            <person name="Lloyd P."/>
            <person name="Skrzypek M.S."/>
            <person name="Miyasato S.R."/>
            <person name="Simison M."/>
            <person name="Cherry J.M."/>
        </authorList>
    </citation>
    <scope>GENOME REANNOTATION</scope>
    <source>
        <strain>ATCC 204508 / S288c</strain>
    </source>
</reference>
<reference key="3">
    <citation type="journal article" date="2007" name="Genome Res.">
        <title>Approaching a complete repository of sequence-verified protein-encoding clones for Saccharomyces cerevisiae.</title>
        <authorList>
            <person name="Hu Y."/>
            <person name="Rolfs A."/>
            <person name="Bhullar B."/>
            <person name="Murthy T.V.S."/>
            <person name="Zhu C."/>
            <person name="Berger M.F."/>
            <person name="Camargo A.A."/>
            <person name="Kelley F."/>
            <person name="McCarron S."/>
            <person name="Jepson D."/>
            <person name="Richardson A."/>
            <person name="Raphael J."/>
            <person name="Moreira D."/>
            <person name="Taycher E."/>
            <person name="Zuo D."/>
            <person name="Mohr S."/>
            <person name="Kane M.F."/>
            <person name="Williamson J."/>
            <person name="Simpson A.J.G."/>
            <person name="Bulyk M.L."/>
            <person name="Harlow E."/>
            <person name="Marsischky G."/>
            <person name="Kolodner R.D."/>
            <person name="LaBaer J."/>
        </authorList>
    </citation>
    <scope>NUCLEOTIDE SEQUENCE [GENOMIC DNA]</scope>
    <source>
        <strain>ATCC 204508 / S288c</strain>
    </source>
</reference>
<reference key="4">
    <citation type="journal article" date="1999" name="J. Biol. Chem.">
        <title>The Saccharomyces cerevisiae HCR1 gene encoding a homologue of the p35 subunit of human translation initiation factor 3 (eIF3) is a high copy suppressor of a temperature-sensitive mutation in the Rpg1p subunit of yeast eIF3.</title>
        <authorList>
            <person name="Valasek L."/>
            <person name="Hasek J."/>
            <person name="Trachsel H."/>
            <person name="Imre E.M."/>
            <person name="Ruis H."/>
        </authorList>
    </citation>
    <scope>FUNCTION</scope>
</reference>
<reference key="5">
    <citation type="journal article" date="2003" name="Nature">
        <title>Global analysis of protein localization in budding yeast.</title>
        <authorList>
            <person name="Huh W.-K."/>
            <person name="Falvo J.V."/>
            <person name="Gerke L.C."/>
            <person name="Carroll A.S."/>
            <person name="Howson R.W."/>
            <person name="Weissman J.S."/>
            <person name="O'Shea E.K."/>
        </authorList>
    </citation>
    <scope>SUBCELLULAR LOCATION [LARGE SCALE ANALYSIS]</scope>
</reference>
<reference key="6">
    <citation type="journal article" date="2003" name="Nature">
        <title>Global analysis of protein expression in yeast.</title>
        <authorList>
            <person name="Ghaemmaghami S."/>
            <person name="Huh W.-K."/>
            <person name="Bower K."/>
            <person name="Howson R.W."/>
            <person name="Belle A."/>
            <person name="Dephoure N."/>
            <person name="O'Shea E.K."/>
            <person name="Weissman J.S."/>
        </authorList>
    </citation>
    <scope>LEVEL OF PROTEIN EXPRESSION [LARGE SCALE ANALYSIS]</scope>
</reference>
<reference key="7">
    <citation type="journal article" date="2006" name="Mol. Cell. Biol.">
        <title>Interaction of the RNP1 motif in PRT1 with HCR1 promotes 40S binding of eukaryotic initiation factor 3 in yeast.</title>
        <authorList>
            <person name="Nielsen K.H."/>
            <person name="Valasek L."/>
            <person name="Sykes C."/>
            <person name="Jivotovskaya A."/>
            <person name="Hinnebusch A.G."/>
        </authorList>
    </citation>
    <scope>INTERACTION WITH PRT1</scope>
    <scope>ASSOCIATION WITH THE 40S RIBOSOME</scope>
    <scope>DISRUPTION PHENOTYPE</scope>
    <scope>MUTAGENESIS OF ARG-215</scope>
</reference>
<reference key="8">
    <citation type="journal article" date="2007" name="J. Proteome Res.">
        <title>Large-scale phosphorylation analysis of alpha-factor-arrested Saccharomyces cerevisiae.</title>
        <authorList>
            <person name="Li X."/>
            <person name="Gerber S.A."/>
            <person name="Rudner A.D."/>
            <person name="Beausoleil S.A."/>
            <person name="Haas W."/>
            <person name="Villen J."/>
            <person name="Elias J.E."/>
            <person name="Gygi S.P."/>
        </authorList>
    </citation>
    <scope>PHOSPHORYLATION [LARGE SCALE ANALYSIS] AT THR-75</scope>
    <scope>IDENTIFICATION BY MASS SPECTROMETRY [LARGE SCALE ANALYSIS]</scope>
    <source>
        <strain>ADR376</strain>
    </source>
</reference>
<reference key="9">
    <citation type="journal article" date="2008" name="Mol. Cell. Proteomics">
        <title>A multidimensional chromatography technology for in-depth phosphoproteome analysis.</title>
        <authorList>
            <person name="Albuquerque C.P."/>
            <person name="Smolka M.B."/>
            <person name="Payne S.H."/>
            <person name="Bafna V."/>
            <person name="Eng J."/>
            <person name="Zhou H."/>
        </authorList>
    </citation>
    <scope>PHOSPHORYLATION [LARGE SCALE ANALYSIS] AT THR-75</scope>
    <scope>IDENTIFICATION BY MASS SPECTROMETRY [LARGE SCALE ANALYSIS]</scope>
</reference>
<reference key="10">
    <citation type="journal article" date="2009" name="Science">
        <title>Global analysis of Cdk1 substrate phosphorylation sites provides insights into evolution.</title>
        <authorList>
            <person name="Holt L.J."/>
            <person name="Tuch B.B."/>
            <person name="Villen J."/>
            <person name="Johnson A.D."/>
            <person name="Gygi S.P."/>
            <person name="Morgan D.O."/>
        </authorList>
    </citation>
    <scope>PHOSPHORYLATION [LARGE SCALE ANALYSIS] AT THR-75 AND SER-92</scope>
    <scope>IDENTIFICATION BY MASS SPECTROMETRY [LARGE SCALE ANALYSIS]</scope>
</reference>
<reference key="11">
    <citation type="journal article" date="2021" name="J. Proteome Res.">
        <title>Discovery of arginine methylation, phosphorylation, and their co-occurrence in condensate-associated proteins in Saccharomyces cerevisiae.</title>
        <authorList>
            <person name="Hamey J.J."/>
            <person name="Nguyen A."/>
            <person name="Wilkins M.R."/>
        </authorList>
    </citation>
    <scope>METHYLATION AT ARG-220</scope>
    <scope>PHOSPHORYLATION AT SER-65 AND THR-75</scope>
</reference>
<reference evidence="9 10" key="12">
    <citation type="journal article" date="2021" name="EMBO J.">
        <title>A structural inventory of native ribosomal ABCE1-43S pre-initiation complexes.</title>
        <authorList>
            <person name="Kratzat H."/>
            <person name="Mackens-Kiani T."/>
            <person name="Ameismeier M."/>
            <person name="Potocnjak M."/>
            <person name="Cheng J."/>
            <person name="Dacheux E."/>
            <person name="Namane A."/>
            <person name="Berninghausen O."/>
            <person name="Herzog F."/>
            <person name="Fromont-Racine M."/>
            <person name="Becker T."/>
            <person name="Beckmann R."/>
        </authorList>
    </citation>
    <scope>STRUCTURE BY ELECTRON MICROSCOPY (3.00 ANGSTROMS)</scope>
</reference>
<feature type="chain" id="PRO_0000123509" description="Eukaryotic translation initiation factor 3 subunit J">
    <location>
        <begin position="1"/>
        <end position="265"/>
    </location>
</feature>
<feature type="region of interest" description="Disordered" evidence="2">
    <location>
        <begin position="1"/>
        <end position="71"/>
    </location>
</feature>
<feature type="region of interest" description="Disordered" evidence="2">
    <location>
        <begin position="219"/>
        <end position="265"/>
    </location>
</feature>
<feature type="compositionally biased region" description="Acidic residues" evidence="2">
    <location>
        <begin position="23"/>
        <end position="32"/>
    </location>
</feature>
<feature type="compositionally biased region" description="Basic and acidic residues" evidence="2">
    <location>
        <begin position="42"/>
        <end position="71"/>
    </location>
</feature>
<feature type="compositionally biased region" description="Acidic residues" evidence="2">
    <location>
        <begin position="249"/>
        <end position="265"/>
    </location>
</feature>
<feature type="modified residue" description="Phosphoserine" evidence="7">
    <location>
        <position position="65"/>
    </location>
</feature>
<feature type="modified residue" description="Phosphothreonine" evidence="7 11 12 13">
    <location>
        <position position="75"/>
    </location>
</feature>
<feature type="modified residue" description="Phosphoserine" evidence="13">
    <location>
        <position position="92"/>
    </location>
</feature>
<feature type="modified residue" description="Omega-N-methylarginine" evidence="7">
    <location>
        <position position="220"/>
    </location>
</feature>
<feature type="mutagenesis site" description="Increased association of the eIF-3 complex and 40S ribosomes." evidence="6">
    <original>R</original>
    <variation>I</variation>
    <location>
        <position position="215"/>
    </location>
</feature>
<feature type="helix" evidence="14">
    <location>
        <begin position="147"/>
        <end position="161"/>
    </location>
</feature>
<feature type="helix" evidence="14">
    <location>
        <begin position="162"/>
        <end position="165"/>
    </location>
</feature>
<feature type="helix" evidence="14">
    <location>
        <begin position="169"/>
        <end position="175"/>
    </location>
</feature>
<feature type="helix" evidence="14">
    <location>
        <begin position="177"/>
        <end position="185"/>
    </location>
</feature>
<feature type="strand" evidence="14">
    <location>
        <begin position="186"/>
        <end position="188"/>
    </location>
</feature>
<feature type="helix" evidence="14">
    <location>
        <begin position="190"/>
        <end position="218"/>
    </location>
</feature>
<feature type="strand" evidence="14">
    <location>
        <begin position="219"/>
        <end position="223"/>
    </location>
</feature>
<feature type="helix" evidence="14">
    <location>
        <begin position="226"/>
        <end position="228"/>
    </location>
</feature>
<accession>Q05775</accession>
<accession>D6VYJ5</accession>
<keyword id="KW-0002">3D-structure</keyword>
<keyword id="KW-0963">Cytoplasm</keyword>
<keyword id="KW-0396">Initiation factor</keyword>
<keyword id="KW-0488">Methylation</keyword>
<keyword id="KW-0597">Phosphoprotein</keyword>
<keyword id="KW-0648">Protein biosynthesis</keyword>
<keyword id="KW-1185">Reference proteome</keyword>
<sequence>MSWDDEAINGSMGNDDAVLMDSWDAEIGDDEPVMQSWDAEEEEKKPAPKPKKEQPKKVKKGKESSADRALLDIDTLDEKTRKELIKKAEMESDLNNAADLFAGLGVAEEHPRARALQKEQEEQALKRPAFTKDTPIETHPLFNAETKREYQDLRKALTAAITPMNKKSPLNYSSSLAIDLIRDVAKPMSIESIRQTVATLNVLIKDKEREERQARLARVRGGTATGGAGKKKVKGKTNLGGAFKKDQDFDLDGPDDFEFGDDDFM</sequence>
<proteinExistence type="evidence at protein level"/>
<organism>
    <name type="scientific">Saccharomyces cerevisiae (strain ATCC 204508 / S288c)</name>
    <name type="common">Baker's yeast</name>
    <dbReference type="NCBI Taxonomy" id="559292"/>
    <lineage>
        <taxon>Eukaryota</taxon>
        <taxon>Fungi</taxon>
        <taxon>Dikarya</taxon>
        <taxon>Ascomycota</taxon>
        <taxon>Saccharomycotina</taxon>
        <taxon>Saccharomycetes</taxon>
        <taxon>Saccharomycetales</taxon>
        <taxon>Saccharomycetaceae</taxon>
        <taxon>Saccharomyces</taxon>
    </lineage>
</organism>
<gene>
    <name evidence="1 8" type="primary">HCR1</name>
    <name type="ordered locus">YLR192C</name>
    <name type="ORF">L8167.11</name>
</gene>
<name>EIF3J_YEAST</name>
<protein>
    <recommendedName>
        <fullName evidence="1">Eukaryotic translation initiation factor 3 subunit J</fullName>
        <shortName evidence="1">eIF3j</shortName>
    </recommendedName>
    <alternativeName>
        <fullName>Eukaryotic translation initiation factor 3 30 kDa subunit</fullName>
        <shortName>eIF-3 30 kDa</shortName>
    </alternativeName>
    <alternativeName>
        <fullName evidence="8">High-copy suppressor of Rpg1 protein 1</fullName>
    </alternativeName>
</protein>
<comment type="function">
    <text evidence="1 3">Component of the eukaryotic translation initiation factor 3 (eIF-3) complex, which is involved in protein synthesis of a specialized repertoire of mRNAs and, together with other initiation factors, stimulates binding of mRNA and methionyl-tRNAi to the 40S ribosome. The eIF-3 complex specifically targets and initiates translation of a subset of mRNAs involved in cell proliferation.</text>
</comment>
<comment type="subunit">
    <text>Probable component of the eukaryotic translation initiation factor 3 (eIF-3) complex. Is not part of the eIF-3 core complex, with which it is associated in substochiometric amounts.</text>
</comment>
<comment type="interaction">
    <interactant intactId="EBI-8944">
        <id>Q05775</id>
    </interactant>
    <interactant intactId="EBI-35146">
        <id>Q03195</id>
        <label>RLI1</label>
    </interactant>
    <organismsDiffer>false</organismsDiffer>
    <experiments>5</experiments>
</comment>
<comment type="subcellular location">
    <subcellularLocation>
        <location evidence="1 4">Cytoplasm</location>
    </subcellularLocation>
</comment>
<comment type="disruption phenotype">
    <text evidence="6">Marked reduction in binding of the eIF-3 core complex to 40S ribosomes.</text>
</comment>
<comment type="miscellaneous">
    <text evidence="5">Present with 17900 molecules/cell in log phase SD medium.</text>
</comment>
<comment type="similarity">
    <text evidence="1">Belongs to the eIF-3 subunit J family.</text>
</comment>
<dbReference type="EMBL" id="U14913">
    <property type="protein sequence ID" value="AAB67433.1"/>
    <property type="molecule type" value="Genomic_DNA"/>
</dbReference>
<dbReference type="EMBL" id="AY557943">
    <property type="protein sequence ID" value="AAS56269.1"/>
    <property type="molecule type" value="Genomic_DNA"/>
</dbReference>
<dbReference type="EMBL" id="BK006945">
    <property type="protein sequence ID" value="DAA09511.1"/>
    <property type="molecule type" value="Genomic_DNA"/>
</dbReference>
<dbReference type="PIR" id="S48545">
    <property type="entry name" value="S48545"/>
</dbReference>
<dbReference type="RefSeq" id="NP_013293.1">
    <property type="nucleotide sequence ID" value="NM_001182079.1"/>
</dbReference>
<dbReference type="PDB" id="6ZCE">
    <property type="method" value="EM"/>
    <property type="resolution" value="5.30 A"/>
    <property type="chains" value="s/t=1-265"/>
</dbReference>
<dbReference type="PDB" id="7A1G">
    <property type="method" value="EM"/>
    <property type="resolution" value="3.00 A"/>
    <property type="chains" value="y/z=1-265"/>
</dbReference>
<dbReference type="PDB" id="8CAH">
    <property type="method" value="EM"/>
    <property type="resolution" value="3.00 A"/>
    <property type="chains" value="y/z=1-265"/>
</dbReference>
<dbReference type="PDBsum" id="6ZCE"/>
<dbReference type="PDBsum" id="7A1G"/>
<dbReference type="PDBsum" id="8CAH"/>
<dbReference type="EMDB" id="EMD-11160"/>
<dbReference type="EMDB" id="EMD-11608"/>
<dbReference type="EMDB" id="EMD-16525"/>
<dbReference type="SMR" id="Q05775"/>
<dbReference type="BioGRID" id="31462">
    <property type="interactions" value="389"/>
</dbReference>
<dbReference type="DIP" id="DIP-4532N"/>
<dbReference type="FunCoup" id="Q05775">
    <property type="interactions" value="150"/>
</dbReference>
<dbReference type="IntAct" id="Q05775">
    <property type="interactions" value="29"/>
</dbReference>
<dbReference type="MINT" id="Q05775"/>
<dbReference type="STRING" id="4932.YLR192C"/>
<dbReference type="iPTMnet" id="Q05775"/>
<dbReference type="PaxDb" id="4932-YLR192C"/>
<dbReference type="PeptideAtlas" id="Q05775"/>
<dbReference type="EnsemblFungi" id="YLR192C_mRNA">
    <property type="protein sequence ID" value="YLR192C"/>
    <property type="gene ID" value="YLR192C"/>
</dbReference>
<dbReference type="GeneID" id="850889"/>
<dbReference type="KEGG" id="sce:YLR192C"/>
<dbReference type="AGR" id="SGD:S000004182"/>
<dbReference type="SGD" id="S000004182">
    <property type="gene designation" value="HCR1"/>
</dbReference>
<dbReference type="VEuPathDB" id="FungiDB:YLR192C"/>
<dbReference type="eggNOG" id="KOG4813">
    <property type="taxonomic scope" value="Eukaryota"/>
</dbReference>
<dbReference type="HOGENOM" id="CLU_085412_0_0_1"/>
<dbReference type="InParanoid" id="Q05775"/>
<dbReference type="OMA" id="MESWDAE"/>
<dbReference type="OrthoDB" id="20381at2759"/>
<dbReference type="BioCyc" id="YEAST:G3O-32314-MONOMER"/>
<dbReference type="Reactome" id="R-SCE-156827">
    <property type="pathway name" value="L13a-mediated translational silencing of Ceruloplasmin expression"/>
</dbReference>
<dbReference type="Reactome" id="R-SCE-72649">
    <property type="pathway name" value="Translation initiation complex formation"/>
</dbReference>
<dbReference type="Reactome" id="R-SCE-72695">
    <property type="pathway name" value="Formation of the ternary complex, and subsequently, the 43S complex"/>
</dbReference>
<dbReference type="Reactome" id="R-SCE-72702">
    <property type="pathway name" value="Ribosomal scanning and start codon recognition"/>
</dbReference>
<dbReference type="BioGRID-ORCS" id="850889">
    <property type="hits" value="0 hits in 10 CRISPR screens"/>
</dbReference>
<dbReference type="CD-CODE" id="E03F929F">
    <property type="entry name" value="Stress granule"/>
</dbReference>
<dbReference type="PRO" id="PR:Q05775"/>
<dbReference type="Proteomes" id="UP000002311">
    <property type="component" value="Chromosome XII"/>
</dbReference>
<dbReference type="RNAct" id="Q05775">
    <property type="molecule type" value="protein"/>
</dbReference>
<dbReference type="GO" id="GO:0010494">
    <property type="term" value="C:cytoplasmic stress granule"/>
    <property type="evidence" value="ECO:0007005"/>
    <property type="project" value="SGD"/>
</dbReference>
<dbReference type="GO" id="GO:0016282">
    <property type="term" value="C:eukaryotic 43S preinitiation complex"/>
    <property type="evidence" value="ECO:0007669"/>
    <property type="project" value="UniProtKB-UniRule"/>
</dbReference>
<dbReference type="GO" id="GO:0033290">
    <property type="term" value="C:eukaryotic 48S preinitiation complex"/>
    <property type="evidence" value="ECO:0007669"/>
    <property type="project" value="UniProtKB-UniRule"/>
</dbReference>
<dbReference type="GO" id="GO:0005852">
    <property type="term" value="C:eukaryotic translation initiation factor 3 complex"/>
    <property type="evidence" value="ECO:0000353"/>
    <property type="project" value="SGD"/>
</dbReference>
<dbReference type="GO" id="GO:0003743">
    <property type="term" value="F:translation initiation factor activity"/>
    <property type="evidence" value="ECO:0000353"/>
    <property type="project" value="SGD"/>
</dbReference>
<dbReference type="GO" id="GO:0002181">
    <property type="term" value="P:cytoplasmic translation"/>
    <property type="evidence" value="ECO:0000353"/>
    <property type="project" value="SGD"/>
</dbReference>
<dbReference type="GO" id="GO:0001732">
    <property type="term" value="P:formation of cytoplasmic translation initiation complex"/>
    <property type="evidence" value="ECO:0007669"/>
    <property type="project" value="UniProtKB-UniRule"/>
</dbReference>
<dbReference type="GO" id="GO:0000462">
    <property type="term" value="P:maturation of SSU-rRNA from tricistronic rRNA transcript (SSU-rRNA, 5.8S rRNA, LSU-rRNA)"/>
    <property type="evidence" value="ECO:0000315"/>
    <property type="project" value="SGD"/>
</dbReference>
<dbReference type="GO" id="GO:0000184">
    <property type="term" value="P:nuclear-transcribed mRNA catabolic process, nonsense-mediated decay"/>
    <property type="evidence" value="ECO:0000315"/>
    <property type="project" value="SGD"/>
</dbReference>
<dbReference type="FunFam" id="1.10.246.60:FF:000004">
    <property type="entry name" value="Eukaryotic translation initiation factor 3 subunit J"/>
    <property type="match status" value="1"/>
</dbReference>
<dbReference type="Gene3D" id="1.10.246.60">
    <property type="entry name" value="Eukaryotic translation initiation factor 3 like domains"/>
    <property type="match status" value="1"/>
</dbReference>
<dbReference type="HAMAP" id="MF_03009">
    <property type="entry name" value="eIF3j"/>
    <property type="match status" value="1"/>
</dbReference>
<dbReference type="InterPro" id="IPR023194">
    <property type="entry name" value="eIF3-like_dom_sf"/>
</dbReference>
<dbReference type="InterPro" id="IPR013906">
    <property type="entry name" value="eIF3j"/>
</dbReference>
<dbReference type="PANTHER" id="PTHR21681">
    <property type="entry name" value="EUKARYOTIC TRANSLATION INITIATION FACTOR 3 SUBUNIT J"/>
    <property type="match status" value="1"/>
</dbReference>
<dbReference type="PANTHER" id="PTHR21681:SF0">
    <property type="entry name" value="EUKARYOTIC TRANSLATION INITIATION FACTOR 3 SUBUNIT J"/>
    <property type="match status" value="1"/>
</dbReference>
<dbReference type="Pfam" id="PF08597">
    <property type="entry name" value="eIF3_subunit"/>
    <property type="match status" value="1"/>
</dbReference>